<evidence type="ECO:0000305" key="1"/>
<accession>P26425</accession>
<sequence>MTLTQEKRSYMEKLSDENGIISALAFDQRGALKRLMAQYQTQEPTIAQMEELKVLVAEELTPYASSMLLDPEYGLPAAKHLDKNAGLLLAYEKTGYDTTSTKRLPDCLVEWSAKRLKKQGADAVKFLLYYDVDGDEEVNQQKQAYIERIGSECKAEDIPFFLEILAYDETITDAASVEYAKVKPHKVLDAMKVFSDERFGIDVLKVEVPVNMKYVEGFGDGPIVHTQDQAANFFKQQDQATPLPYIYLSAGVSAKLFQDTLVFAKESGANFNGVLCGRATWAGSVKDYIEKGEAAARQWLRTEGFKNIDELNKVLKATATSWKER</sequence>
<organism>
    <name type="scientific">Streptococcus mutans serotype c (strain ATCC 700610 / UA159)</name>
    <dbReference type="NCBI Taxonomy" id="210007"/>
    <lineage>
        <taxon>Bacteria</taxon>
        <taxon>Bacillati</taxon>
        <taxon>Bacillota</taxon>
        <taxon>Bacilli</taxon>
        <taxon>Lactobacillales</taxon>
        <taxon>Streptococcaceae</taxon>
        <taxon>Streptococcus</taxon>
    </lineage>
</organism>
<reference key="1">
    <citation type="journal article" date="1992" name="J. Bacteriol.">
        <title>Nucleotide and deduced amino acid sequences of the lacR, lacABCD, and lacFE genes encoding the repressor, tagatose 6-phosphate gene cluster, and sugar-specific phosphotransferase system components of the lactose operon of Streptococcus mutans.</title>
        <authorList>
            <person name="Rosey E.L."/>
            <person name="Stewart G.C."/>
        </authorList>
    </citation>
    <scope>NUCLEOTIDE SEQUENCE [GENOMIC DNA]</scope>
</reference>
<reference key="2">
    <citation type="journal article" date="2002" name="Proc. Natl. Acad. Sci. U.S.A.">
        <title>Genome sequence of Streptococcus mutans UA159, a cariogenic dental pathogen.</title>
        <authorList>
            <person name="Ajdic D.J."/>
            <person name="McShan W.M."/>
            <person name="McLaughlin R.E."/>
            <person name="Savic G."/>
            <person name="Chang J."/>
            <person name="Carson M.B."/>
            <person name="Primeaux C."/>
            <person name="Tian R."/>
            <person name="Kenton S."/>
            <person name="Jia H.G."/>
            <person name="Lin S.P."/>
            <person name="Qian Y."/>
            <person name="Li S."/>
            <person name="Zhu H."/>
            <person name="Najar F.Z."/>
            <person name="Lai H."/>
            <person name="White J."/>
            <person name="Roe B.A."/>
            <person name="Ferretti J.J."/>
        </authorList>
    </citation>
    <scope>NUCLEOTIDE SEQUENCE [LARGE SCALE GENOMIC DNA]</scope>
    <source>
        <strain>ATCC 700610 / UA159</strain>
    </source>
</reference>
<name>LACD1_STRMU</name>
<feature type="chain" id="PRO_0000203957" description="Tagatose 1,6-diphosphate aldolase 1">
    <location>
        <begin position="1"/>
        <end position="325"/>
    </location>
</feature>
<feature type="sequence conflict" description="In Ref. 1; AAA26907." evidence="1" ref="1">
    <original>K</original>
    <variation>E</variation>
    <location>
        <position position="323"/>
    </location>
</feature>
<protein>
    <recommendedName>
        <fullName>Tagatose 1,6-diphosphate aldolase 1</fullName>
        <ecNumber>4.1.2.40</ecNumber>
    </recommendedName>
    <alternativeName>
        <fullName>D-tagatose-1,6-bisphosphate aldolase 1</fullName>
    </alternativeName>
    <alternativeName>
        <fullName>Tagatose-bisphosphate aldolase 1</fullName>
    </alternativeName>
</protein>
<dbReference type="EC" id="4.1.2.40"/>
<dbReference type="EMBL" id="M80797">
    <property type="protein sequence ID" value="AAA26907.1"/>
    <property type="molecule type" value="Genomic_DNA"/>
</dbReference>
<dbReference type="EMBL" id="AE014133">
    <property type="protein sequence ID" value="AAN59147.1"/>
    <property type="molecule type" value="Genomic_DNA"/>
</dbReference>
<dbReference type="PIR" id="F43258">
    <property type="entry name" value="F43258"/>
</dbReference>
<dbReference type="RefSeq" id="NP_721841.1">
    <property type="nucleotide sequence ID" value="NC_004350.2"/>
</dbReference>
<dbReference type="RefSeq" id="WP_002277661.1">
    <property type="nucleotide sequence ID" value="NC_004350.2"/>
</dbReference>
<dbReference type="SMR" id="P26425"/>
<dbReference type="STRING" id="210007.SMU_1493"/>
<dbReference type="KEGG" id="smu:SMU_1493"/>
<dbReference type="PATRIC" id="fig|210007.7.peg.1329"/>
<dbReference type="eggNOG" id="COG3684">
    <property type="taxonomic scope" value="Bacteria"/>
</dbReference>
<dbReference type="HOGENOM" id="CLU_058971_0_1_9"/>
<dbReference type="OrthoDB" id="106309at2"/>
<dbReference type="PhylomeDB" id="P26425"/>
<dbReference type="UniPathway" id="UPA00704">
    <property type="reaction ID" value="UER00716"/>
</dbReference>
<dbReference type="Proteomes" id="UP000002512">
    <property type="component" value="Chromosome"/>
</dbReference>
<dbReference type="GO" id="GO:0061595">
    <property type="term" value="F:6-deoxy-6-sulfofructose-1-phosphate aldolase activity"/>
    <property type="evidence" value="ECO:0007669"/>
    <property type="project" value="TreeGrafter"/>
</dbReference>
<dbReference type="GO" id="GO:0009024">
    <property type="term" value="F:tagatose-6-phosphate kinase activity"/>
    <property type="evidence" value="ECO:0007669"/>
    <property type="project" value="InterPro"/>
</dbReference>
<dbReference type="GO" id="GO:0009025">
    <property type="term" value="F:tagatose-bisphosphate aldolase activity"/>
    <property type="evidence" value="ECO:0007669"/>
    <property type="project" value="UniProtKB-UniRule"/>
</dbReference>
<dbReference type="GO" id="GO:1902777">
    <property type="term" value="P:6-sulfoquinovose(1-) catabolic process"/>
    <property type="evidence" value="ECO:0007669"/>
    <property type="project" value="TreeGrafter"/>
</dbReference>
<dbReference type="GO" id="GO:2001059">
    <property type="term" value="P:D-tagatose 6-phosphate catabolic process"/>
    <property type="evidence" value="ECO:0007669"/>
    <property type="project" value="UniProtKB-UniRule"/>
</dbReference>
<dbReference type="GO" id="GO:0019512">
    <property type="term" value="P:lactose catabolic process via tagatose-6-phosphate"/>
    <property type="evidence" value="ECO:0007669"/>
    <property type="project" value="InterPro"/>
</dbReference>
<dbReference type="FunFam" id="3.20.20.70:FF:000137">
    <property type="entry name" value="Tagatose 1,6-diphosphate aldolase 2"/>
    <property type="match status" value="1"/>
</dbReference>
<dbReference type="Gene3D" id="3.20.20.70">
    <property type="entry name" value="Aldolase class I"/>
    <property type="match status" value="1"/>
</dbReference>
<dbReference type="HAMAP" id="MF_00734">
    <property type="entry name" value="LacD"/>
    <property type="match status" value="1"/>
</dbReference>
<dbReference type="InterPro" id="IPR013785">
    <property type="entry name" value="Aldolase_TIM"/>
</dbReference>
<dbReference type="InterPro" id="IPR002915">
    <property type="entry name" value="DeoC/FbaB/LacD_aldolase"/>
</dbReference>
<dbReference type="InterPro" id="IPR050552">
    <property type="entry name" value="LacD_aldolase"/>
</dbReference>
<dbReference type="InterPro" id="IPR005927">
    <property type="entry name" value="Tag_1.6-dipho_adolase"/>
</dbReference>
<dbReference type="NCBIfam" id="TIGR01232">
    <property type="entry name" value="lacD"/>
    <property type="match status" value="1"/>
</dbReference>
<dbReference type="NCBIfam" id="NF003180">
    <property type="entry name" value="PRK04161.1"/>
    <property type="match status" value="1"/>
</dbReference>
<dbReference type="NCBIfam" id="NF009065">
    <property type="entry name" value="PRK12399.1"/>
    <property type="match status" value="1"/>
</dbReference>
<dbReference type="NCBIfam" id="NF009498">
    <property type="entry name" value="PRK12858.1"/>
    <property type="match status" value="1"/>
</dbReference>
<dbReference type="PANTHER" id="PTHR39340">
    <property type="entry name" value="SULFOFRUCTOSEPHOSPHATE ALDOLASE"/>
    <property type="match status" value="1"/>
</dbReference>
<dbReference type="PANTHER" id="PTHR39340:SF1">
    <property type="entry name" value="SULFOFRUCTOSEPHOSPHATE ALDOLASE"/>
    <property type="match status" value="1"/>
</dbReference>
<dbReference type="Pfam" id="PF01791">
    <property type="entry name" value="DeoC"/>
    <property type="match status" value="1"/>
</dbReference>
<dbReference type="SMART" id="SM01133">
    <property type="entry name" value="DeoC"/>
    <property type="match status" value="1"/>
</dbReference>
<dbReference type="SUPFAM" id="SSF51569">
    <property type="entry name" value="Aldolase"/>
    <property type="match status" value="1"/>
</dbReference>
<proteinExistence type="inferred from homology"/>
<comment type="catalytic activity">
    <reaction>
        <text>D-tagatofuranose 1,6-bisphosphate = D-glyceraldehyde 3-phosphate + dihydroxyacetone phosphate</text>
        <dbReference type="Rhea" id="RHEA:22948"/>
        <dbReference type="ChEBI" id="CHEBI:57642"/>
        <dbReference type="ChEBI" id="CHEBI:58694"/>
        <dbReference type="ChEBI" id="CHEBI:59776"/>
        <dbReference type="EC" id="4.1.2.40"/>
    </reaction>
</comment>
<comment type="pathway">
    <text>Carbohydrate metabolism; D-tagatose 6-phosphate degradation; D-glyceraldehyde 3-phosphate and glycerone phosphate from D-tagatose 6-phosphate: step 2/2.</text>
</comment>
<comment type="similarity">
    <text evidence="1">Belongs to the aldolase LacD family.</text>
</comment>
<keyword id="KW-0423">Lactose metabolism</keyword>
<keyword id="KW-0456">Lyase</keyword>
<keyword id="KW-1185">Reference proteome</keyword>
<gene>
    <name type="primary">lacD1</name>
    <name type="synonym">lacD</name>
    <name type="ordered locus">SMU_1493</name>
</gene>